<gene>
    <name type="ordered locus">SSU98_0878</name>
</gene>
<accession>A4W0Z7</accession>
<protein>
    <recommendedName>
        <fullName evidence="1">UPF0122 protein SSU98_0878</fullName>
    </recommendedName>
</protein>
<feature type="chain" id="PRO_1000012550" description="UPF0122 protein SSU98_0878">
    <location>
        <begin position="1"/>
        <end position="113"/>
    </location>
</feature>
<evidence type="ECO:0000255" key="1">
    <source>
        <dbReference type="HAMAP-Rule" id="MF_00245"/>
    </source>
</evidence>
<proteinExistence type="inferred from homology"/>
<dbReference type="EMBL" id="CP000408">
    <property type="protein sequence ID" value="ABP92036.1"/>
    <property type="molecule type" value="Genomic_DNA"/>
</dbReference>
<dbReference type="SMR" id="A4W0Z7"/>
<dbReference type="KEGG" id="ssv:SSU98_0878"/>
<dbReference type="HOGENOM" id="CLU_129218_1_1_9"/>
<dbReference type="BioCyc" id="SSUI391296:GI2E-931-MONOMER"/>
<dbReference type="Gene3D" id="1.10.10.10">
    <property type="entry name" value="Winged helix-like DNA-binding domain superfamily/Winged helix DNA-binding domain"/>
    <property type="match status" value="1"/>
</dbReference>
<dbReference type="HAMAP" id="MF_00245">
    <property type="entry name" value="UPF0122"/>
    <property type="match status" value="1"/>
</dbReference>
<dbReference type="InterPro" id="IPR013324">
    <property type="entry name" value="RNA_pol_sigma_r3/r4-like"/>
</dbReference>
<dbReference type="InterPro" id="IPR007394">
    <property type="entry name" value="UPF0122"/>
</dbReference>
<dbReference type="InterPro" id="IPR054831">
    <property type="entry name" value="UPF0122_fam_protein"/>
</dbReference>
<dbReference type="InterPro" id="IPR036388">
    <property type="entry name" value="WH-like_DNA-bd_sf"/>
</dbReference>
<dbReference type="NCBIfam" id="NF001066">
    <property type="entry name" value="PRK00118.1-1"/>
    <property type="match status" value="1"/>
</dbReference>
<dbReference type="NCBIfam" id="NF001068">
    <property type="entry name" value="PRK00118.1-4"/>
    <property type="match status" value="1"/>
</dbReference>
<dbReference type="NCBIfam" id="NF001070">
    <property type="entry name" value="PRK00118.1-6"/>
    <property type="match status" value="1"/>
</dbReference>
<dbReference type="NCBIfam" id="NF045758">
    <property type="entry name" value="YlxM"/>
    <property type="match status" value="1"/>
</dbReference>
<dbReference type="PANTHER" id="PTHR40083">
    <property type="entry name" value="UPF0122 PROTEIN CBO2450/CLC_2298"/>
    <property type="match status" value="1"/>
</dbReference>
<dbReference type="PANTHER" id="PTHR40083:SF1">
    <property type="entry name" value="UPF0122 PROTEIN YLXM"/>
    <property type="match status" value="1"/>
</dbReference>
<dbReference type="Pfam" id="PF04297">
    <property type="entry name" value="UPF0122"/>
    <property type="match status" value="1"/>
</dbReference>
<dbReference type="SUPFAM" id="SSF88659">
    <property type="entry name" value="Sigma3 and sigma4 domains of RNA polymerase sigma factors"/>
    <property type="match status" value="1"/>
</dbReference>
<comment type="function">
    <text evidence="1">Might take part in the signal recognition particle (SRP) pathway. This is inferred from the conservation of its genetic proximity to ftsY/ffh. May be a regulatory protein.</text>
</comment>
<comment type="similarity">
    <text evidence="1">Belongs to the UPF0122 family.</text>
</comment>
<organism>
    <name type="scientific">Streptococcus suis (strain 98HAH33)</name>
    <dbReference type="NCBI Taxonomy" id="391296"/>
    <lineage>
        <taxon>Bacteria</taxon>
        <taxon>Bacillati</taxon>
        <taxon>Bacillota</taxon>
        <taxon>Bacilli</taxon>
        <taxon>Lactobacillales</taxon>
        <taxon>Streptococcaceae</taxon>
        <taxon>Streptococcus</taxon>
    </lineage>
</organism>
<sequence>MKFMEIEKTNRMNALFEFYAALLTDKQMNYIELYYADDYSLAEIAEEFQVSRQAVYDNIKRTEKLLEDYEMKLHMYSDYVVRSQIFDEILNKYPEDAYLKEKIAILTSIDNRE</sequence>
<reference key="1">
    <citation type="journal article" date="2007" name="PLoS ONE">
        <title>A glimpse of streptococcal toxic shock syndrome from comparative genomics of S. suis 2 Chinese isolates.</title>
        <authorList>
            <person name="Chen C."/>
            <person name="Tang J."/>
            <person name="Dong W."/>
            <person name="Wang C."/>
            <person name="Feng Y."/>
            <person name="Wang J."/>
            <person name="Zheng F."/>
            <person name="Pan X."/>
            <person name="Liu D."/>
            <person name="Li M."/>
            <person name="Song Y."/>
            <person name="Zhu X."/>
            <person name="Sun H."/>
            <person name="Feng T."/>
            <person name="Guo Z."/>
            <person name="Ju A."/>
            <person name="Ge J."/>
            <person name="Dong Y."/>
            <person name="Sun W."/>
            <person name="Jiang Y."/>
            <person name="Wang J."/>
            <person name="Yan J."/>
            <person name="Yang H."/>
            <person name="Wang X."/>
            <person name="Gao G.F."/>
            <person name="Yang R."/>
            <person name="Wang J."/>
            <person name="Yu J."/>
        </authorList>
    </citation>
    <scope>NUCLEOTIDE SEQUENCE [LARGE SCALE GENOMIC DNA]</scope>
    <source>
        <strain>98HAH33</strain>
    </source>
</reference>
<name>Y878_STRS2</name>